<evidence type="ECO:0000255" key="1">
    <source>
        <dbReference type="HAMAP-Rule" id="MF_00361"/>
    </source>
</evidence>
<accession>P9WHV6</accession>
<accession>L0T903</accession>
<accession>O33196</accession>
<accession>P0A5S6</accession>
<name>NADK_MYCTO</name>
<dbReference type="EC" id="2.7.1.23" evidence="1"/>
<dbReference type="EMBL" id="AE000516">
    <property type="protein sequence ID" value="AAK46003.1"/>
    <property type="molecule type" value="Genomic_DNA"/>
</dbReference>
<dbReference type="PIR" id="F70502">
    <property type="entry name" value="F70502"/>
</dbReference>
<dbReference type="RefSeq" id="WP_003408383.1">
    <property type="nucleotide sequence ID" value="NZ_KK341227.1"/>
</dbReference>
<dbReference type="SMR" id="P9WHV6"/>
<dbReference type="KEGG" id="mtc:MT1734"/>
<dbReference type="PATRIC" id="fig|83331.31.peg.1862"/>
<dbReference type="HOGENOM" id="CLU_008831_0_0_11"/>
<dbReference type="Proteomes" id="UP000001020">
    <property type="component" value="Chromosome"/>
</dbReference>
<dbReference type="GO" id="GO:0005737">
    <property type="term" value="C:cytoplasm"/>
    <property type="evidence" value="ECO:0007669"/>
    <property type="project" value="UniProtKB-SubCell"/>
</dbReference>
<dbReference type="GO" id="GO:0005524">
    <property type="term" value="F:ATP binding"/>
    <property type="evidence" value="ECO:0007669"/>
    <property type="project" value="UniProtKB-KW"/>
</dbReference>
<dbReference type="GO" id="GO:0046872">
    <property type="term" value="F:metal ion binding"/>
    <property type="evidence" value="ECO:0007669"/>
    <property type="project" value="UniProtKB-UniRule"/>
</dbReference>
<dbReference type="GO" id="GO:0051287">
    <property type="term" value="F:NAD binding"/>
    <property type="evidence" value="ECO:0007669"/>
    <property type="project" value="UniProtKB-ARBA"/>
</dbReference>
<dbReference type="GO" id="GO:0003951">
    <property type="term" value="F:NAD+ kinase activity"/>
    <property type="evidence" value="ECO:0007669"/>
    <property type="project" value="UniProtKB-UniRule"/>
</dbReference>
<dbReference type="GO" id="GO:0019674">
    <property type="term" value="P:NAD metabolic process"/>
    <property type="evidence" value="ECO:0007669"/>
    <property type="project" value="InterPro"/>
</dbReference>
<dbReference type="GO" id="GO:0006741">
    <property type="term" value="P:NADP biosynthetic process"/>
    <property type="evidence" value="ECO:0007669"/>
    <property type="project" value="UniProtKB-UniRule"/>
</dbReference>
<dbReference type="FunFam" id="2.60.200.30:FF:000007">
    <property type="entry name" value="NAD kinase"/>
    <property type="match status" value="1"/>
</dbReference>
<dbReference type="Gene3D" id="3.40.50.10330">
    <property type="entry name" value="Probable inorganic polyphosphate/atp-NAD kinase, domain 1"/>
    <property type="match status" value="1"/>
</dbReference>
<dbReference type="Gene3D" id="2.60.200.30">
    <property type="entry name" value="Probable inorganic polyphosphate/atp-NAD kinase, domain 2"/>
    <property type="match status" value="1"/>
</dbReference>
<dbReference type="HAMAP" id="MF_00361">
    <property type="entry name" value="NAD_kinase"/>
    <property type="match status" value="1"/>
</dbReference>
<dbReference type="InterPro" id="IPR017438">
    <property type="entry name" value="ATP-NAD_kinase_N"/>
</dbReference>
<dbReference type="InterPro" id="IPR017437">
    <property type="entry name" value="ATP-NAD_kinase_PpnK-typ_C"/>
</dbReference>
<dbReference type="InterPro" id="IPR016064">
    <property type="entry name" value="NAD/diacylglycerol_kinase_sf"/>
</dbReference>
<dbReference type="InterPro" id="IPR002504">
    <property type="entry name" value="NADK"/>
</dbReference>
<dbReference type="NCBIfam" id="NF002892">
    <property type="entry name" value="PRK03372.1"/>
    <property type="match status" value="1"/>
</dbReference>
<dbReference type="PANTHER" id="PTHR20275">
    <property type="entry name" value="NAD KINASE"/>
    <property type="match status" value="1"/>
</dbReference>
<dbReference type="PANTHER" id="PTHR20275:SF0">
    <property type="entry name" value="NAD KINASE"/>
    <property type="match status" value="1"/>
</dbReference>
<dbReference type="Pfam" id="PF01513">
    <property type="entry name" value="NAD_kinase"/>
    <property type="match status" value="1"/>
</dbReference>
<dbReference type="Pfam" id="PF20143">
    <property type="entry name" value="NAD_kinase_C"/>
    <property type="match status" value="1"/>
</dbReference>
<dbReference type="SUPFAM" id="SSF111331">
    <property type="entry name" value="NAD kinase/diacylglycerol kinase-like"/>
    <property type="match status" value="1"/>
</dbReference>
<reference key="1">
    <citation type="journal article" date="2002" name="J. Bacteriol.">
        <title>Whole-genome comparison of Mycobacterium tuberculosis clinical and laboratory strains.</title>
        <authorList>
            <person name="Fleischmann R.D."/>
            <person name="Alland D."/>
            <person name="Eisen J.A."/>
            <person name="Carpenter L."/>
            <person name="White O."/>
            <person name="Peterson J.D."/>
            <person name="DeBoy R.T."/>
            <person name="Dodson R.J."/>
            <person name="Gwinn M.L."/>
            <person name="Haft D.H."/>
            <person name="Hickey E.K."/>
            <person name="Kolonay J.F."/>
            <person name="Nelson W.C."/>
            <person name="Umayam L.A."/>
            <person name="Ermolaeva M.D."/>
            <person name="Salzberg S.L."/>
            <person name="Delcher A."/>
            <person name="Utterback T.R."/>
            <person name="Weidman J.F."/>
            <person name="Khouri H.M."/>
            <person name="Gill J."/>
            <person name="Mikula A."/>
            <person name="Bishai W."/>
            <person name="Jacobs W.R. Jr."/>
            <person name="Venter J.C."/>
            <person name="Fraser C.M."/>
        </authorList>
    </citation>
    <scope>NUCLEOTIDE SEQUENCE [LARGE SCALE GENOMIC DNA]</scope>
    <source>
        <strain>CDC 1551 / Oshkosh</strain>
    </source>
</reference>
<feature type="chain" id="PRO_0000428115" description="NAD kinase">
    <location>
        <begin position="1"/>
        <end position="307"/>
    </location>
</feature>
<feature type="active site" description="Proton acceptor" evidence="1">
    <location>
        <position position="85"/>
    </location>
</feature>
<feature type="binding site" evidence="1">
    <location>
        <begin position="85"/>
        <end position="86"/>
    </location>
    <ligand>
        <name>NAD(+)</name>
        <dbReference type="ChEBI" id="CHEBI:57540"/>
    </ligand>
</feature>
<feature type="binding site" evidence="1">
    <location>
        <position position="90"/>
    </location>
    <ligand>
        <name>NAD(+)</name>
        <dbReference type="ChEBI" id="CHEBI:57540"/>
    </ligand>
</feature>
<feature type="binding site" evidence="1">
    <location>
        <begin position="159"/>
        <end position="160"/>
    </location>
    <ligand>
        <name>NAD(+)</name>
        <dbReference type="ChEBI" id="CHEBI:57540"/>
    </ligand>
</feature>
<feature type="binding site" evidence="1">
    <location>
        <position position="189"/>
    </location>
    <ligand>
        <name>NAD(+)</name>
        <dbReference type="ChEBI" id="CHEBI:57540"/>
    </ligand>
</feature>
<feature type="binding site" evidence="1">
    <location>
        <begin position="200"/>
        <end position="205"/>
    </location>
    <ligand>
        <name>NAD(+)</name>
        <dbReference type="ChEBI" id="CHEBI:57540"/>
    </ligand>
</feature>
<sequence>MTAHRSVLLVVHTGRDEATETARRVEKVLGDNKIALRVLSAEAVDRGSLHLAPDDMRAMGVEIEVVDADQHAADGCELVLVLGGDGTFLRAAELARNASIPVLGVNLGRIGFLAEAEAEAIDAVLEHVVAQDYRVEDRLTLDVVVRQGGRIVNRGWALNEVSLEKGPRLGVLGVVVEIDGRPVSAFGCDGVLVSTPTGSTAYAFSAGGPVLWPDLEAILVVPNNAHALFGRPMVTSPEATIAIEIEADGHDALVFCDGRREMLIPAGSRLEVTRCVTSVKWARLDSAPFTDRLVRKFRLPVTGWRGK</sequence>
<keyword id="KW-0067">ATP-binding</keyword>
<keyword id="KW-0963">Cytoplasm</keyword>
<keyword id="KW-0418">Kinase</keyword>
<keyword id="KW-0520">NAD</keyword>
<keyword id="KW-0521">NADP</keyword>
<keyword id="KW-0547">Nucleotide-binding</keyword>
<keyword id="KW-1185">Reference proteome</keyword>
<keyword id="KW-0808">Transferase</keyword>
<protein>
    <recommendedName>
        <fullName evidence="1">NAD kinase</fullName>
        <ecNumber evidence="1">2.7.1.23</ecNumber>
    </recommendedName>
    <alternativeName>
        <fullName evidence="1">ATP-dependent NAD kinase</fullName>
    </alternativeName>
</protein>
<comment type="function">
    <text evidence="1">Involved in the regulation of the intracellular balance of NAD and NADP, and is a key enzyme in the biosynthesis of NADP. Catalyzes specifically the phosphorylation on 2'-hydroxyl of the adenosine moiety of NAD to yield NADP.</text>
</comment>
<comment type="catalytic activity">
    <reaction evidence="1">
        <text>NAD(+) + ATP = ADP + NADP(+) + H(+)</text>
        <dbReference type="Rhea" id="RHEA:18629"/>
        <dbReference type="ChEBI" id="CHEBI:15378"/>
        <dbReference type="ChEBI" id="CHEBI:30616"/>
        <dbReference type="ChEBI" id="CHEBI:57540"/>
        <dbReference type="ChEBI" id="CHEBI:58349"/>
        <dbReference type="ChEBI" id="CHEBI:456216"/>
        <dbReference type="EC" id="2.7.1.23"/>
    </reaction>
</comment>
<comment type="cofactor">
    <cofactor evidence="1">
        <name>a divalent metal cation</name>
        <dbReference type="ChEBI" id="CHEBI:60240"/>
    </cofactor>
</comment>
<comment type="subcellular location">
    <subcellularLocation>
        <location evidence="1">Cytoplasm</location>
    </subcellularLocation>
</comment>
<comment type="similarity">
    <text evidence="1">Belongs to the NAD kinase family.</text>
</comment>
<proteinExistence type="inferred from homology"/>
<gene>
    <name evidence="1" type="primary">nadK</name>
    <name type="ordered locus">MT1734</name>
</gene>
<organism>
    <name type="scientific">Mycobacterium tuberculosis (strain CDC 1551 / Oshkosh)</name>
    <dbReference type="NCBI Taxonomy" id="83331"/>
    <lineage>
        <taxon>Bacteria</taxon>
        <taxon>Bacillati</taxon>
        <taxon>Actinomycetota</taxon>
        <taxon>Actinomycetes</taxon>
        <taxon>Mycobacteriales</taxon>
        <taxon>Mycobacteriaceae</taxon>
        <taxon>Mycobacterium</taxon>
        <taxon>Mycobacterium tuberculosis complex</taxon>
    </lineage>
</organism>